<evidence type="ECO:0000269" key="1">
    <source>
    </source>
</evidence>
<evidence type="ECO:0000269" key="2">
    <source>
    </source>
</evidence>
<evidence type="ECO:0000303" key="3">
    <source>
    </source>
</evidence>
<evidence type="ECO:0000305" key="4"/>
<name>MDARF_CUCSA</name>
<comment type="function">
    <text>Catalyzes the conversion of monodehydroascorbate to ascorbate, oxidizing NADH in the process.</text>
</comment>
<comment type="catalytic activity">
    <reaction evidence="1">
        <text>2 monodehydro-L-ascorbate radical + NADH + H(+) = 2 L-ascorbate + NAD(+)</text>
        <dbReference type="Rhea" id="RHEA:14581"/>
        <dbReference type="ChEBI" id="CHEBI:15378"/>
        <dbReference type="ChEBI" id="CHEBI:38290"/>
        <dbReference type="ChEBI" id="CHEBI:57540"/>
        <dbReference type="ChEBI" id="CHEBI:57945"/>
        <dbReference type="ChEBI" id="CHEBI:59513"/>
        <dbReference type="EC" id="1.6.5.4"/>
    </reaction>
</comment>
<comment type="cofactor">
    <cofactor evidence="1">
        <name>FAD</name>
        <dbReference type="ChEBI" id="CHEBI:57692"/>
    </cofactor>
</comment>
<comment type="biophysicochemical properties">
    <kinetics>
        <KM>4.6 uM for NADH</KM>
        <KM>23 uM for NADPH</KM>
        <KM>1.4 uM for monodehydroascorbate</KM>
        <Vmax>256.0 umol/min/mg enzyme for NADH oxidation reaction</Vmax>
        <Vmax>192.0 umol/min/mg enzyme for NADPH oxidation reaction</Vmax>
    </kinetics>
    <phDependence>
        <text>Optimum pH is 7-9.</text>
    </phDependence>
</comment>
<comment type="PTM">
    <text evidence="2">The N-terminus is blocked.</text>
</comment>
<comment type="similarity">
    <text evidence="4">Belongs to the FAD-dependent oxidoreductase family.</text>
</comment>
<organism>
    <name type="scientific">Cucumis sativus</name>
    <name type="common">Cucumber</name>
    <dbReference type="NCBI Taxonomy" id="3659"/>
    <lineage>
        <taxon>Eukaryota</taxon>
        <taxon>Viridiplantae</taxon>
        <taxon>Streptophyta</taxon>
        <taxon>Embryophyta</taxon>
        <taxon>Tracheophyta</taxon>
        <taxon>Spermatophyta</taxon>
        <taxon>Magnoliopsida</taxon>
        <taxon>eudicotyledons</taxon>
        <taxon>Gunneridae</taxon>
        <taxon>Pentapetalae</taxon>
        <taxon>rosids</taxon>
        <taxon>fabids</taxon>
        <taxon>Cucurbitales</taxon>
        <taxon>Cucurbitaceae</taxon>
        <taxon>Benincaseae</taxon>
        <taxon>Cucumis</taxon>
    </lineage>
</organism>
<reference evidence="4" key="1">
    <citation type="journal article" date="1994" name="Plant Cell Physiol.">
        <title>cDNA cloning of monodehydroascorbate radical reductase from Cucumber: a high degree of homology in terms of amino acid sequence between this enzyme and bacterial flavoenzymes.</title>
        <authorList>
            <person name="Sano S."/>
            <person name="Asada K."/>
        </authorList>
    </citation>
    <scope>PROTEIN SEQUENCE</scope>
    <source>
        <tissue evidence="2">Fruit</tissue>
    </source>
</reference>
<reference evidence="4" key="2">
    <citation type="journal article" date="1985" name="J. Biol. Chem.">
        <title>Monodehydroascorbate reductase from cucumber is a flavin adenine dinucleotide enzyme.</title>
        <authorList>
            <person name="Hossain M.A."/>
            <person name="Asada K."/>
        </authorList>
    </citation>
    <scope>CATALYTIC ACTIVITY</scope>
    <scope>COFACTOR</scope>
    <source>
        <tissue evidence="1">Fruit</tissue>
    </source>
</reference>
<protein>
    <recommendedName>
        <fullName>Monodehydroascorbate reductase, fruit isozyme</fullName>
        <shortName>MDAR fruit</shortName>
        <ecNumber>1.6.5.4</ecNumber>
    </recommendedName>
    <alternativeName>
        <fullName>Ascorbate free radical reductase fruit</fullName>
        <shortName>AFR reductase fruit</shortName>
    </alternativeName>
</protein>
<keyword id="KW-0903">Direct protein sequencing</keyword>
<keyword id="KW-0274">FAD</keyword>
<keyword id="KW-0285">Flavoprotein</keyword>
<keyword id="KW-0520">NAD</keyword>
<keyword id="KW-0560">Oxidoreductase</keyword>
<keyword id="KW-0676">Redox-active center</keyword>
<dbReference type="EC" id="1.6.5.4"/>
<dbReference type="SMR" id="P83966"/>
<dbReference type="GO" id="GO:0016656">
    <property type="term" value="F:monodehydroascorbate reductase (NADH) activity"/>
    <property type="evidence" value="ECO:0007669"/>
    <property type="project" value="UniProtKB-EC"/>
</dbReference>
<dbReference type="Gene3D" id="3.30.390.30">
    <property type="match status" value="1"/>
</dbReference>
<dbReference type="Gene3D" id="3.50.50.60">
    <property type="entry name" value="FAD/NAD(P)-binding domain"/>
    <property type="match status" value="1"/>
</dbReference>
<dbReference type="InterPro" id="IPR050446">
    <property type="entry name" value="FAD-oxidoreductase/Apoptosis"/>
</dbReference>
<dbReference type="InterPro" id="IPR036188">
    <property type="entry name" value="FAD/NAD-bd_sf"/>
</dbReference>
<dbReference type="InterPro" id="IPR016156">
    <property type="entry name" value="FAD/NAD-linked_Rdtase_dimer_sf"/>
</dbReference>
<dbReference type="InterPro" id="IPR048618">
    <property type="entry name" value="MDHAR3-like_C"/>
</dbReference>
<dbReference type="PANTHER" id="PTHR43557">
    <property type="entry name" value="APOPTOSIS-INDUCING FACTOR 1"/>
    <property type="match status" value="1"/>
</dbReference>
<dbReference type="PANTHER" id="PTHR43557:SF5">
    <property type="entry name" value="MONODEHYDROASCORBATE REDUCTASE 1, PEROXISOMAL"/>
    <property type="match status" value="1"/>
</dbReference>
<dbReference type="Pfam" id="PF21791">
    <property type="entry name" value="MDHAR3-like_C"/>
    <property type="match status" value="1"/>
</dbReference>
<dbReference type="SUPFAM" id="SSF51905">
    <property type="entry name" value="FAD/NAD(P)-binding domain"/>
    <property type="match status" value="1"/>
</dbReference>
<dbReference type="SUPFAM" id="SSF55424">
    <property type="entry name" value="FAD/NAD-linked reductases, dimerisation (C-terminal) domain"/>
    <property type="match status" value="1"/>
</dbReference>
<proteinExistence type="evidence at protein level"/>
<sequence>EAVAPYERPALSKNIFYLREIADADQLVEAIKLKDGRTLDADIVVVGVGGRPLVSLFKTSIPDVYAVGDVATYPLKLYNELRRVEHVDHARLSIEEYDYLPYFYSRTFNLAWQFYGDNVGETVLFPDNFGTYWIKVVGVFLEGGTPDEYKVARVQPPVESLDQLAK</sequence>
<accession>P83966</accession>
<feature type="chain" id="PRO_0000209141" description="Monodehydroascorbate reductase, fruit isozyme">
    <location>
        <begin position="1" status="less than"/>
        <end position="166" status="greater than"/>
    </location>
</feature>
<feature type="unsure residue" description="L or K">
    <location>
        <position position="92"/>
    </location>
</feature>
<feature type="non-consecutive residues" evidence="3">
    <location>
        <begin position="13"/>
        <end position="14"/>
    </location>
</feature>
<feature type="non-consecutive residues" evidence="3">
    <location>
        <begin position="32"/>
        <end position="33"/>
    </location>
</feature>
<feature type="non-consecutive residues" evidence="3">
    <location>
        <begin position="58"/>
        <end position="59"/>
    </location>
</feature>
<feature type="non-consecutive residues" evidence="3">
    <location>
        <begin position="92"/>
        <end position="93"/>
    </location>
</feature>
<feature type="non-consecutive residues" evidence="3">
    <location>
        <begin position="128"/>
        <end position="129"/>
    </location>
</feature>
<feature type="non-consecutive residues" evidence="3">
    <location>
        <begin position="135"/>
        <end position="136"/>
    </location>
</feature>
<feature type="non-consecutive residues" evidence="3">
    <location>
        <begin position="150"/>
        <end position="151"/>
    </location>
</feature>
<feature type="non-terminal residue" evidence="3">
    <location>
        <position position="1"/>
    </location>
</feature>
<feature type="non-terminal residue" evidence="3">
    <location>
        <position position="166"/>
    </location>
</feature>